<proteinExistence type="inferred from homology"/>
<organism>
    <name type="scientific">Achromobacter xylosoxidans (strain A8)</name>
    <dbReference type="NCBI Taxonomy" id="762376"/>
    <lineage>
        <taxon>Bacteria</taxon>
        <taxon>Pseudomonadati</taxon>
        <taxon>Pseudomonadota</taxon>
        <taxon>Betaproteobacteria</taxon>
        <taxon>Burkholderiales</taxon>
        <taxon>Alcaligenaceae</taxon>
        <taxon>Achromobacter</taxon>
    </lineage>
</organism>
<gene>
    <name evidence="1" type="primary">phnN</name>
    <name type="ordered locus">AXYL_05082</name>
</gene>
<feature type="chain" id="PRO_0000412769" description="Ribose 1,5-bisphosphate phosphokinase PhnN">
    <location>
        <begin position="1"/>
        <end position="192"/>
    </location>
</feature>
<accession>E3HQ85</accession>
<protein>
    <recommendedName>
        <fullName evidence="1">Ribose 1,5-bisphosphate phosphokinase PhnN</fullName>
        <ecNumber evidence="1">2.7.4.23</ecNumber>
    </recommendedName>
    <alternativeName>
        <fullName evidence="1">Ribose 1,5-bisphosphokinase</fullName>
    </alternativeName>
</protein>
<evidence type="ECO:0000255" key="1">
    <source>
        <dbReference type="HAMAP-Rule" id="MF_00836"/>
    </source>
</evidence>
<sequence length="192" mass="20593">MTPSVPADGARLIYLMGASGSGKDTLLRLLRAELRGDEPVLVAHRYITRDSGDTEDALRLTEDEFGRRAALGCFALRWASHGLQYGIGIEIDAWLSCGAAVIINGSRAHLEQAHSRYPALTAVEVTVDPGQLARRLAGRGRESAEQIAQRLARATQPFPVPLQCQLLRVSNDAAPETAAATLLDIARGKLAA</sequence>
<dbReference type="EC" id="2.7.4.23" evidence="1"/>
<dbReference type="EMBL" id="CP002287">
    <property type="protein sequence ID" value="ADP18388.1"/>
    <property type="molecule type" value="Genomic_DNA"/>
</dbReference>
<dbReference type="RefSeq" id="WP_013395692.1">
    <property type="nucleotide sequence ID" value="NC_014640.1"/>
</dbReference>
<dbReference type="SMR" id="E3HQ85"/>
<dbReference type="STRING" id="762376.AXYL_05082"/>
<dbReference type="KEGG" id="axy:AXYL_05082"/>
<dbReference type="PATRIC" id="fig|762376.5.peg.5084"/>
<dbReference type="eggNOG" id="COG3709">
    <property type="taxonomic scope" value="Bacteria"/>
</dbReference>
<dbReference type="HOGENOM" id="CLU_102477_0_0_4"/>
<dbReference type="OrthoDB" id="341217at2"/>
<dbReference type="UniPathway" id="UPA00087">
    <property type="reaction ID" value="UER00175"/>
</dbReference>
<dbReference type="Proteomes" id="UP000006876">
    <property type="component" value="Chromosome"/>
</dbReference>
<dbReference type="GO" id="GO:0005524">
    <property type="term" value="F:ATP binding"/>
    <property type="evidence" value="ECO:0007669"/>
    <property type="project" value="UniProtKB-KW"/>
</dbReference>
<dbReference type="GO" id="GO:0033863">
    <property type="term" value="F:ribose 1,5-bisphosphate phosphokinase activity"/>
    <property type="evidence" value="ECO:0007669"/>
    <property type="project" value="UniProtKB-UniRule"/>
</dbReference>
<dbReference type="GO" id="GO:0006015">
    <property type="term" value="P:5-phosphoribose 1-diphosphate biosynthetic process"/>
    <property type="evidence" value="ECO:0007669"/>
    <property type="project" value="UniProtKB-UniRule"/>
</dbReference>
<dbReference type="GO" id="GO:0019634">
    <property type="term" value="P:organic phosphonate metabolic process"/>
    <property type="evidence" value="ECO:0007669"/>
    <property type="project" value="UniProtKB-UniRule"/>
</dbReference>
<dbReference type="Gene3D" id="3.40.50.300">
    <property type="entry name" value="P-loop containing nucleotide triphosphate hydrolases"/>
    <property type="match status" value="1"/>
</dbReference>
<dbReference type="HAMAP" id="MF_00836">
    <property type="entry name" value="PhnN"/>
    <property type="match status" value="1"/>
</dbReference>
<dbReference type="InterPro" id="IPR008145">
    <property type="entry name" value="GK/Ca_channel_bsu"/>
</dbReference>
<dbReference type="InterPro" id="IPR027417">
    <property type="entry name" value="P-loop_NTPase"/>
</dbReference>
<dbReference type="InterPro" id="IPR012699">
    <property type="entry name" value="PhnN"/>
</dbReference>
<dbReference type="NCBIfam" id="TIGR02322">
    <property type="entry name" value="phosphon_PhnN"/>
    <property type="match status" value="1"/>
</dbReference>
<dbReference type="NCBIfam" id="NF007485">
    <property type="entry name" value="PRK10078.1"/>
    <property type="match status" value="1"/>
</dbReference>
<dbReference type="Pfam" id="PF13238">
    <property type="entry name" value="AAA_18"/>
    <property type="match status" value="1"/>
</dbReference>
<dbReference type="SMART" id="SM00072">
    <property type="entry name" value="GuKc"/>
    <property type="match status" value="1"/>
</dbReference>
<dbReference type="SUPFAM" id="SSF52540">
    <property type="entry name" value="P-loop containing nucleoside triphosphate hydrolases"/>
    <property type="match status" value="1"/>
</dbReference>
<comment type="function">
    <text evidence="1">Catalyzes the phosphorylation of ribose 1,5-bisphosphate to 5-phospho-D-ribosyl alpha-1-diphosphate (PRPP).</text>
</comment>
<comment type="catalytic activity">
    <reaction evidence="1">
        <text>alpha-D-ribose 1,5-bisphosphate + ATP = 5-phospho-alpha-D-ribose 1-diphosphate + ADP</text>
        <dbReference type="Rhea" id="RHEA:20109"/>
        <dbReference type="ChEBI" id="CHEBI:30616"/>
        <dbReference type="ChEBI" id="CHEBI:58017"/>
        <dbReference type="ChEBI" id="CHEBI:68688"/>
        <dbReference type="ChEBI" id="CHEBI:456216"/>
        <dbReference type="EC" id="2.7.4.23"/>
    </reaction>
</comment>
<comment type="pathway">
    <text evidence="1">Metabolic intermediate biosynthesis; 5-phospho-alpha-D-ribose 1-diphosphate biosynthesis; 5-phospho-alpha-D-ribose 1-diphosphate from D-ribose 5-phosphate (route II): step 3/3.</text>
</comment>
<comment type="similarity">
    <text evidence="1">Belongs to the ribose 1,5-bisphosphokinase family.</text>
</comment>
<keyword id="KW-0067">ATP-binding</keyword>
<keyword id="KW-0547">Nucleotide-binding</keyword>
<keyword id="KW-0808">Transferase</keyword>
<reference key="1">
    <citation type="journal article" date="2011" name="J. Bacteriol.">
        <title>Complete genome sequence of the haloaromatic acid-degrading bacterium Achromobacter xylosoxidans A8.</title>
        <authorList>
            <person name="Strnad H."/>
            <person name="Ridl J."/>
            <person name="Paces J."/>
            <person name="Kolar M."/>
            <person name="Vlcek C."/>
            <person name="Paces V."/>
        </authorList>
    </citation>
    <scope>NUCLEOTIDE SEQUENCE [LARGE SCALE GENOMIC DNA]</scope>
    <source>
        <strain>A8</strain>
    </source>
</reference>
<name>PHNN_ACHXA</name>